<organism>
    <name type="scientific">Vulpes vulpes</name>
    <name type="common">Red fox</name>
    <dbReference type="NCBI Taxonomy" id="9627"/>
    <lineage>
        <taxon>Eukaryota</taxon>
        <taxon>Metazoa</taxon>
        <taxon>Chordata</taxon>
        <taxon>Craniata</taxon>
        <taxon>Vertebrata</taxon>
        <taxon>Euteleostomi</taxon>
        <taxon>Mammalia</taxon>
        <taxon>Eutheria</taxon>
        <taxon>Laurasiatheria</taxon>
        <taxon>Carnivora</taxon>
        <taxon>Caniformia</taxon>
        <taxon>Canidae</taxon>
        <taxon>Vulpes</taxon>
    </lineage>
</organism>
<reference key="1">
    <citation type="journal article" date="2006" name="Mol. Phylogenet. Evol.">
        <title>Pinniped phylogeny and a new hypothesis for their origin and dispersal.</title>
        <authorList>
            <person name="Arnason U."/>
            <person name="Gullberg A."/>
            <person name="Janke A."/>
            <person name="Kullberg M."/>
            <person name="Lehman N."/>
            <person name="Petrov E.A."/>
            <person name="Vainola R."/>
        </authorList>
    </citation>
    <scope>NUCLEOTIDE SEQUENCE [GENOMIC DNA]</scope>
</reference>
<gene>
    <name type="primary">MT-ND4L</name>
    <name type="synonym">MTND4L</name>
    <name type="synonym">NADH4L</name>
    <name type="synonym">ND4L</name>
</gene>
<proteinExistence type="inferred from homology"/>
<name>NU4LM_VULVU</name>
<dbReference type="EC" id="7.1.1.2"/>
<dbReference type="EMBL" id="AM181037">
    <property type="protein sequence ID" value="CAJ57152.1"/>
    <property type="molecule type" value="Genomic_DNA"/>
</dbReference>
<dbReference type="RefSeq" id="YP_778937.1">
    <property type="nucleotide sequence ID" value="NC_008434.1"/>
</dbReference>
<dbReference type="SMR" id="Q08GU6"/>
<dbReference type="STRING" id="9627.ENSVVUP00000036721"/>
<dbReference type="GeneID" id="4355761"/>
<dbReference type="KEGG" id="vvp:4355761"/>
<dbReference type="CTD" id="4539"/>
<dbReference type="OrthoDB" id="19063at33554"/>
<dbReference type="Proteomes" id="UP000286640">
    <property type="component" value="Mitochondrion MT"/>
</dbReference>
<dbReference type="GO" id="GO:0005743">
    <property type="term" value="C:mitochondrial inner membrane"/>
    <property type="evidence" value="ECO:0000250"/>
    <property type="project" value="UniProtKB"/>
</dbReference>
<dbReference type="GO" id="GO:0045271">
    <property type="term" value="C:respiratory chain complex I"/>
    <property type="evidence" value="ECO:0000250"/>
    <property type="project" value="UniProtKB"/>
</dbReference>
<dbReference type="GO" id="GO:0008137">
    <property type="term" value="F:NADH dehydrogenase (ubiquinone) activity"/>
    <property type="evidence" value="ECO:0000250"/>
    <property type="project" value="UniProtKB"/>
</dbReference>
<dbReference type="GO" id="GO:0042773">
    <property type="term" value="P:ATP synthesis coupled electron transport"/>
    <property type="evidence" value="ECO:0007669"/>
    <property type="project" value="InterPro"/>
</dbReference>
<dbReference type="FunFam" id="1.10.287.3510:FF:000002">
    <property type="entry name" value="NADH-ubiquinone oxidoreductase chain 4L"/>
    <property type="match status" value="1"/>
</dbReference>
<dbReference type="Gene3D" id="1.10.287.3510">
    <property type="match status" value="1"/>
</dbReference>
<dbReference type="InterPro" id="IPR001133">
    <property type="entry name" value="NADH_UbQ_OxRdtase_chain4L/K"/>
</dbReference>
<dbReference type="InterPro" id="IPR039428">
    <property type="entry name" value="NUOK/Mnh_C1-like"/>
</dbReference>
<dbReference type="PANTHER" id="PTHR11434:SF0">
    <property type="entry name" value="NADH-UBIQUINONE OXIDOREDUCTASE CHAIN 4L"/>
    <property type="match status" value="1"/>
</dbReference>
<dbReference type="PANTHER" id="PTHR11434">
    <property type="entry name" value="NADH-UBIQUINONE OXIDOREDUCTASE SUBUNIT ND4L"/>
    <property type="match status" value="1"/>
</dbReference>
<dbReference type="Pfam" id="PF00420">
    <property type="entry name" value="Oxidored_q2"/>
    <property type="match status" value="1"/>
</dbReference>
<feature type="chain" id="PRO_0000275150" description="NADH-ubiquinone oxidoreductase chain 4L">
    <location>
        <begin position="1"/>
        <end position="98"/>
    </location>
</feature>
<feature type="transmembrane region" description="Helical" evidence="3">
    <location>
        <begin position="1"/>
        <end position="21"/>
    </location>
</feature>
<feature type="transmembrane region" description="Helical" evidence="3">
    <location>
        <begin position="29"/>
        <end position="49"/>
    </location>
</feature>
<feature type="transmembrane region" description="Helical" evidence="3">
    <location>
        <begin position="61"/>
        <end position="81"/>
    </location>
</feature>
<geneLocation type="mitochondrion"/>
<comment type="function">
    <text evidence="1">Core subunit of the mitochondrial membrane respiratory chain NADH dehydrogenase (Complex I) which catalyzes electron transfer from NADH through the respiratory chain, using ubiquinone as an electron acceptor. Part of the enzyme membrane arm which is embedded in the lipid bilayer and involved in proton translocation.</text>
</comment>
<comment type="catalytic activity">
    <reaction evidence="1">
        <text>a ubiquinone + NADH + 5 H(+)(in) = a ubiquinol + NAD(+) + 4 H(+)(out)</text>
        <dbReference type="Rhea" id="RHEA:29091"/>
        <dbReference type="Rhea" id="RHEA-COMP:9565"/>
        <dbReference type="Rhea" id="RHEA-COMP:9566"/>
        <dbReference type="ChEBI" id="CHEBI:15378"/>
        <dbReference type="ChEBI" id="CHEBI:16389"/>
        <dbReference type="ChEBI" id="CHEBI:17976"/>
        <dbReference type="ChEBI" id="CHEBI:57540"/>
        <dbReference type="ChEBI" id="CHEBI:57945"/>
        <dbReference type="EC" id="7.1.1.2"/>
    </reaction>
    <physiologicalReaction direction="left-to-right" evidence="1">
        <dbReference type="Rhea" id="RHEA:29092"/>
    </physiologicalReaction>
</comment>
<comment type="subunit">
    <text evidence="2">Core subunit of respiratory chain NADH dehydrogenase (Complex I) which is composed of 45 different subunits.</text>
</comment>
<comment type="subcellular location">
    <subcellularLocation>
        <location evidence="2">Mitochondrion inner membrane</location>
        <topology evidence="3">Multi-pass membrane protein</topology>
    </subcellularLocation>
</comment>
<comment type="similarity">
    <text evidence="4">Belongs to the complex I subunit 4L family.</text>
</comment>
<sequence length="98" mass="10836">MSMVYINIFLAFILSLMGMLVYRSHLMSSLLCLEGMMLSLFVMMSVTILNNHLTLASMMPIVLLVFAACEAALGLSLLVMVSNTYGTDHVQNLNLLQC</sequence>
<keyword id="KW-0249">Electron transport</keyword>
<keyword id="KW-0472">Membrane</keyword>
<keyword id="KW-0496">Mitochondrion</keyword>
<keyword id="KW-0999">Mitochondrion inner membrane</keyword>
<keyword id="KW-0520">NAD</keyword>
<keyword id="KW-1185">Reference proteome</keyword>
<keyword id="KW-0679">Respiratory chain</keyword>
<keyword id="KW-1278">Translocase</keyword>
<keyword id="KW-0812">Transmembrane</keyword>
<keyword id="KW-1133">Transmembrane helix</keyword>
<keyword id="KW-0813">Transport</keyword>
<keyword id="KW-0830">Ubiquinone</keyword>
<accession>Q08GU6</accession>
<protein>
    <recommendedName>
        <fullName>NADH-ubiquinone oxidoreductase chain 4L</fullName>
        <ecNumber>7.1.1.2</ecNumber>
    </recommendedName>
    <alternativeName>
        <fullName>NADH dehydrogenase subunit 4L</fullName>
    </alternativeName>
</protein>
<evidence type="ECO:0000250" key="1">
    <source>
        <dbReference type="UniProtKB" id="P03901"/>
    </source>
</evidence>
<evidence type="ECO:0000250" key="2">
    <source>
        <dbReference type="UniProtKB" id="P03902"/>
    </source>
</evidence>
<evidence type="ECO:0000255" key="3"/>
<evidence type="ECO:0000305" key="4"/>